<name>RECA_FRAP2</name>
<sequence length="360" mass="39189">MSKEKALESALSQIEKQFGKGSIMRLGDQETAHDIDVIPSGIIALDVALGIGGYPKGRIIEIYGHESSGKTTLTLLAIAQCQKQGGVAAFIDAEHALDPKYAKLLGVDVDNLIVSQPDTGEQALEIADMLVRSGGIDIVVIDSVAALTPKAEIEGDMGDSHMGLQARLMSQALRKLTANIKRSNTLVMFINQIRMKIGVMFGNPETTTGGNALKFYASVRLEVRKGGSIKDGVDVSGNEIKVKIVKNKVAPPFKQAEFELIYGEGISLEAELIDLGAKYEIIEKSGAWYSYKGKKIGQGKEKSKEYLKENTLERDEIEKALLQLLLPQKYAVQEQVQPEPKSKQSKSKQASEQATQDELI</sequence>
<dbReference type="EMBL" id="CP000937">
    <property type="protein sequence ID" value="ABZ86925.1"/>
    <property type="molecule type" value="Genomic_DNA"/>
</dbReference>
<dbReference type="SMR" id="B0TW17"/>
<dbReference type="KEGG" id="fph:Fphi_0704"/>
<dbReference type="eggNOG" id="COG0468">
    <property type="taxonomic scope" value="Bacteria"/>
</dbReference>
<dbReference type="HOGENOM" id="CLU_040469_3_2_6"/>
<dbReference type="GO" id="GO:0005829">
    <property type="term" value="C:cytosol"/>
    <property type="evidence" value="ECO:0007669"/>
    <property type="project" value="TreeGrafter"/>
</dbReference>
<dbReference type="GO" id="GO:0005524">
    <property type="term" value="F:ATP binding"/>
    <property type="evidence" value="ECO:0007669"/>
    <property type="project" value="UniProtKB-UniRule"/>
</dbReference>
<dbReference type="GO" id="GO:0016887">
    <property type="term" value="F:ATP hydrolysis activity"/>
    <property type="evidence" value="ECO:0007669"/>
    <property type="project" value="InterPro"/>
</dbReference>
<dbReference type="GO" id="GO:0140664">
    <property type="term" value="F:ATP-dependent DNA damage sensor activity"/>
    <property type="evidence" value="ECO:0007669"/>
    <property type="project" value="InterPro"/>
</dbReference>
<dbReference type="GO" id="GO:0003684">
    <property type="term" value="F:damaged DNA binding"/>
    <property type="evidence" value="ECO:0007669"/>
    <property type="project" value="UniProtKB-UniRule"/>
</dbReference>
<dbReference type="GO" id="GO:0003697">
    <property type="term" value="F:single-stranded DNA binding"/>
    <property type="evidence" value="ECO:0007669"/>
    <property type="project" value="UniProtKB-UniRule"/>
</dbReference>
<dbReference type="GO" id="GO:0006310">
    <property type="term" value="P:DNA recombination"/>
    <property type="evidence" value="ECO:0007669"/>
    <property type="project" value="UniProtKB-UniRule"/>
</dbReference>
<dbReference type="GO" id="GO:0006281">
    <property type="term" value="P:DNA repair"/>
    <property type="evidence" value="ECO:0007669"/>
    <property type="project" value="UniProtKB-UniRule"/>
</dbReference>
<dbReference type="GO" id="GO:0009432">
    <property type="term" value="P:SOS response"/>
    <property type="evidence" value="ECO:0007669"/>
    <property type="project" value="UniProtKB-UniRule"/>
</dbReference>
<dbReference type="CDD" id="cd00983">
    <property type="entry name" value="RecA"/>
    <property type="match status" value="1"/>
</dbReference>
<dbReference type="FunFam" id="3.40.50.300:FF:000087">
    <property type="entry name" value="Recombinase RecA"/>
    <property type="match status" value="1"/>
</dbReference>
<dbReference type="Gene3D" id="3.40.50.300">
    <property type="entry name" value="P-loop containing nucleotide triphosphate hydrolases"/>
    <property type="match status" value="1"/>
</dbReference>
<dbReference type="HAMAP" id="MF_00268">
    <property type="entry name" value="RecA"/>
    <property type="match status" value="1"/>
</dbReference>
<dbReference type="InterPro" id="IPR003593">
    <property type="entry name" value="AAA+_ATPase"/>
</dbReference>
<dbReference type="InterPro" id="IPR013765">
    <property type="entry name" value="DNA_recomb/repair_RecA"/>
</dbReference>
<dbReference type="InterPro" id="IPR020584">
    <property type="entry name" value="DNA_recomb/repair_RecA_CS"/>
</dbReference>
<dbReference type="InterPro" id="IPR027417">
    <property type="entry name" value="P-loop_NTPase"/>
</dbReference>
<dbReference type="InterPro" id="IPR049261">
    <property type="entry name" value="RecA-like_C"/>
</dbReference>
<dbReference type="InterPro" id="IPR049428">
    <property type="entry name" value="RecA-like_N"/>
</dbReference>
<dbReference type="InterPro" id="IPR020588">
    <property type="entry name" value="RecA_ATP-bd"/>
</dbReference>
<dbReference type="InterPro" id="IPR023400">
    <property type="entry name" value="RecA_C_sf"/>
</dbReference>
<dbReference type="InterPro" id="IPR020587">
    <property type="entry name" value="RecA_monomer-monomer_interface"/>
</dbReference>
<dbReference type="NCBIfam" id="TIGR02012">
    <property type="entry name" value="tigrfam_recA"/>
    <property type="match status" value="1"/>
</dbReference>
<dbReference type="PANTHER" id="PTHR45900:SF1">
    <property type="entry name" value="MITOCHONDRIAL DNA REPAIR PROTEIN RECA HOMOLOG-RELATED"/>
    <property type="match status" value="1"/>
</dbReference>
<dbReference type="PANTHER" id="PTHR45900">
    <property type="entry name" value="RECA"/>
    <property type="match status" value="1"/>
</dbReference>
<dbReference type="Pfam" id="PF00154">
    <property type="entry name" value="RecA"/>
    <property type="match status" value="1"/>
</dbReference>
<dbReference type="Pfam" id="PF21096">
    <property type="entry name" value="RecA_C"/>
    <property type="match status" value="1"/>
</dbReference>
<dbReference type="PRINTS" id="PR00142">
    <property type="entry name" value="RECA"/>
</dbReference>
<dbReference type="SMART" id="SM00382">
    <property type="entry name" value="AAA"/>
    <property type="match status" value="1"/>
</dbReference>
<dbReference type="SUPFAM" id="SSF52540">
    <property type="entry name" value="P-loop containing nucleoside triphosphate hydrolases"/>
    <property type="match status" value="1"/>
</dbReference>
<dbReference type="SUPFAM" id="SSF54752">
    <property type="entry name" value="RecA protein, C-terminal domain"/>
    <property type="match status" value="1"/>
</dbReference>
<dbReference type="PROSITE" id="PS00321">
    <property type="entry name" value="RECA_1"/>
    <property type="match status" value="1"/>
</dbReference>
<dbReference type="PROSITE" id="PS50162">
    <property type="entry name" value="RECA_2"/>
    <property type="match status" value="1"/>
</dbReference>
<dbReference type="PROSITE" id="PS50163">
    <property type="entry name" value="RECA_3"/>
    <property type="match status" value="1"/>
</dbReference>
<keyword id="KW-0067">ATP-binding</keyword>
<keyword id="KW-0963">Cytoplasm</keyword>
<keyword id="KW-0227">DNA damage</keyword>
<keyword id="KW-0233">DNA recombination</keyword>
<keyword id="KW-0234">DNA repair</keyword>
<keyword id="KW-0238">DNA-binding</keyword>
<keyword id="KW-0547">Nucleotide-binding</keyword>
<keyword id="KW-0742">SOS response</keyword>
<protein>
    <recommendedName>
        <fullName evidence="1">Protein RecA</fullName>
    </recommendedName>
    <alternativeName>
        <fullName evidence="1">Recombinase A</fullName>
    </alternativeName>
</protein>
<gene>
    <name evidence="1" type="primary">recA</name>
    <name type="ordered locus">Fphi_0704</name>
</gene>
<evidence type="ECO:0000255" key="1">
    <source>
        <dbReference type="HAMAP-Rule" id="MF_00268"/>
    </source>
</evidence>
<evidence type="ECO:0000256" key="2">
    <source>
        <dbReference type="SAM" id="MobiDB-lite"/>
    </source>
</evidence>
<accession>B0TW17</accession>
<feature type="chain" id="PRO_1000078667" description="Protein RecA">
    <location>
        <begin position="1"/>
        <end position="360"/>
    </location>
</feature>
<feature type="region of interest" description="Disordered" evidence="2">
    <location>
        <begin position="333"/>
        <end position="360"/>
    </location>
</feature>
<feature type="binding site" evidence="1">
    <location>
        <begin position="64"/>
        <end position="71"/>
    </location>
    <ligand>
        <name>ATP</name>
        <dbReference type="ChEBI" id="CHEBI:30616"/>
    </ligand>
</feature>
<organism>
    <name type="scientific">Francisella philomiragia subsp. philomiragia (strain ATCC 25017 / CCUG 19701 / FSC 153 / O#319-036)</name>
    <dbReference type="NCBI Taxonomy" id="484022"/>
    <lineage>
        <taxon>Bacteria</taxon>
        <taxon>Pseudomonadati</taxon>
        <taxon>Pseudomonadota</taxon>
        <taxon>Gammaproteobacteria</taxon>
        <taxon>Thiotrichales</taxon>
        <taxon>Francisellaceae</taxon>
        <taxon>Francisella</taxon>
    </lineage>
</organism>
<proteinExistence type="inferred from homology"/>
<reference key="1">
    <citation type="submission" date="2007-12" db="EMBL/GenBank/DDBJ databases">
        <title>Complete sequence of chromosome of Francisella philomiragia subsp. philomiragia ATCC 25017.</title>
        <authorList>
            <consortium name="US DOE Joint Genome Institute"/>
            <person name="Copeland A."/>
            <person name="Lucas S."/>
            <person name="Lapidus A."/>
            <person name="Barry K."/>
            <person name="Detter J.C."/>
            <person name="Glavina del Rio T."/>
            <person name="Hammon N."/>
            <person name="Israni S."/>
            <person name="Dalin E."/>
            <person name="Tice H."/>
            <person name="Pitluck S."/>
            <person name="Chain P."/>
            <person name="Malfatti S."/>
            <person name="Shin M."/>
            <person name="Vergez L."/>
            <person name="Schmutz J."/>
            <person name="Larimer F."/>
            <person name="Land M."/>
            <person name="Hauser L."/>
            <person name="Richardson P."/>
        </authorList>
    </citation>
    <scope>NUCLEOTIDE SEQUENCE [LARGE SCALE GENOMIC DNA]</scope>
    <source>
        <strain>ATCC 25017 / CCUG 19701 / FSC 153 / O#319-036</strain>
    </source>
</reference>
<comment type="function">
    <text evidence="1">Can catalyze the hydrolysis of ATP in the presence of single-stranded DNA, the ATP-dependent uptake of single-stranded DNA by duplex DNA, and the ATP-dependent hybridization of homologous single-stranded DNAs. It interacts with LexA causing its activation and leading to its autocatalytic cleavage.</text>
</comment>
<comment type="subcellular location">
    <subcellularLocation>
        <location evidence="1">Cytoplasm</location>
    </subcellularLocation>
</comment>
<comment type="similarity">
    <text evidence="1">Belongs to the RecA family.</text>
</comment>